<name>RR8_NEPOL</name>
<proteinExistence type="inferred from homology"/>
<gene>
    <name type="primary">rps8</name>
</gene>
<feature type="chain" id="PRO_0000126579" description="Small ribosomal subunit protein uS8c">
    <location>
        <begin position="1"/>
        <end position="129"/>
    </location>
</feature>
<reference key="1">
    <citation type="journal article" date="1999" name="Proc. Natl. Acad. Sci. U.S.A.">
        <title>The complete chloroplast DNA sequence of the green alga Nephroselmis olivacea: insights into the architecture of ancestral chloroplast genomes.</title>
        <authorList>
            <person name="Turmel M."/>
            <person name="Otis C."/>
            <person name="Lemieux C."/>
        </authorList>
    </citation>
    <scope>NUCLEOTIDE SEQUENCE [LARGE SCALE GENOMIC DNA]</scope>
</reference>
<dbReference type="EMBL" id="AF137379">
    <property type="protein sequence ID" value="AAD54792.1"/>
    <property type="molecule type" value="Genomic_DNA"/>
</dbReference>
<dbReference type="RefSeq" id="NP_050821.1">
    <property type="nucleotide sequence ID" value="NC_000927.1"/>
</dbReference>
<dbReference type="SMR" id="Q9TL24"/>
<dbReference type="GeneID" id="801969"/>
<dbReference type="GO" id="GO:0009507">
    <property type="term" value="C:chloroplast"/>
    <property type="evidence" value="ECO:0007669"/>
    <property type="project" value="UniProtKB-SubCell"/>
</dbReference>
<dbReference type="GO" id="GO:1990904">
    <property type="term" value="C:ribonucleoprotein complex"/>
    <property type="evidence" value="ECO:0007669"/>
    <property type="project" value="UniProtKB-KW"/>
</dbReference>
<dbReference type="GO" id="GO:0005840">
    <property type="term" value="C:ribosome"/>
    <property type="evidence" value="ECO:0007669"/>
    <property type="project" value="UniProtKB-KW"/>
</dbReference>
<dbReference type="GO" id="GO:0019843">
    <property type="term" value="F:rRNA binding"/>
    <property type="evidence" value="ECO:0007669"/>
    <property type="project" value="UniProtKB-UniRule"/>
</dbReference>
<dbReference type="GO" id="GO:0003735">
    <property type="term" value="F:structural constituent of ribosome"/>
    <property type="evidence" value="ECO:0007669"/>
    <property type="project" value="InterPro"/>
</dbReference>
<dbReference type="GO" id="GO:0006412">
    <property type="term" value="P:translation"/>
    <property type="evidence" value="ECO:0007669"/>
    <property type="project" value="UniProtKB-UniRule"/>
</dbReference>
<dbReference type="FunFam" id="3.30.1490.10:FF:000001">
    <property type="entry name" value="30S ribosomal protein S8"/>
    <property type="match status" value="1"/>
</dbReference>
<dbReference type="Gene3D" id="3.30.1370.30">
    <property type="match status" value="1"/>
</dbReference>
<dbReference type="Gene3D" id="3.30.1490.10">
    <property type="match status" value="1"/>
</dbReference>
<dbReference type="HAMAP" id="MF_01302_B">
    <property type="entry name" value="Ribosomal_uS8_B"/>
    <property type="match status" value="1"/>
</dbReference>
<dbReference type="InterPro" id="IPR000630">
    <property type="entry name" value="Ribosomal_uS8"/>
</dbReference>
<dbReference type="InterPro" id="IPR047863">
    <property type="entry name" value="Ribosomal_uS8_CS"/>
</dbReference>
<dbReference type="InterPro" id="IPR035987">
    <property type="entry name" value="Ribosomal_uS8_sf"/>
</dbReference>
<dbReference type="NCBIfam" id="NF001109">
    <property type="entry name" value="PRK00136.1"/>
    <property type="match status" value="1"/>
</dbReference>
<dbReference type="PANTHER" id="PTHR11758">
    <property type="entry name" value="40S RIBOSOMAL PROTEIN S15A"/>
    <property type="match status" value="1"/>
</dbReference>
<dbReference type="Pfam" id="PF00410">
    <property type="entry name" value="Ribosomal_S8"/>
    <property type="match status" value="1"/>
</dbReference>
<dbReference type="SUPFAM" id="SSF56047">
    <property type="entry name" value="Ribosomal protein S8"/>
    <property type="match status" value="1"/>
</dbReference>
<dbReference type="PROSITE" id="PS00053">
    <property type="entry name" value="RIBOSOMAL_S8"/>
    <property type="match status" value="1"/>
</dbReference>
<protein>
    <recommendedName>
        <fullName evidence="2">Small ribosomal subunit protein uS8c</fullName>
    </recommendedName>
    <alternativeName>
        <fullName>30S ribosomal protein S8, chloroplastic</fullName>
    </alternativeName>
</protein>
<comment type="function">
    <text evidence="1">One of the primary rRNA binding proteins, it binds directly to 16S rRNA central domain where it helps coordinate assembly of the platform of the 30S subunit.</text>
</comment>
<comment type="subunit">
    <text evidence="1">Part of the 30S ribosomal subunit.</text>
</comment>
<comment type="subcellular location">
    <subcellularLocation>
        <location>Plastid</location>
        <location>Chloroplast</location>
    </subcellularLocation>
</comment>
<comment type="similarity">
    <text evidence="2">Belongs to the universal ribosomal protein uS8 family.</text>
</comment>
<sequence length="129" mass="14409">MIQDTIADMLTRIRNANAMRIYTVCMPMTSVAREIAVILETEGWIDSWKEASVNSLILRLKYRGAKQQPILTGLRRVSRSGCRVYVSAKEVPKVLGGMGTAIISTSKGIMTDREARNHRLGGEVICLIW</sequence>
<accession>Q9TL24</accession>
<keyword id="KW-0150">Chloroplast</keyword>
<keyword id="KW-0934">Plastid</keyword>
<keyword id="KW-0687">Ribonucleoprotein</keyword>
<keyword id="KW-0689">Ribosomal protein</keyword>
<keyword id="KW-0694">RNA-binding</keyword>
<keyword id="KW-0699">rRNA-binding</keyword>
<geneLocation type="chloroplast"/>
<evidence type="ECO:0000250" key="1"/>
<evidence type="ECO:0000305" key="2"/>
<organism>
    <name type="scientific">Nephroselmis olivacea</name>
    <name type="common">Green alga</name>
    <dbReference type="NCBI Taxonomy" id="31312"/>
    <lineage>
        <taxon>Eukaryota</taxon>
        <taxon>Viridiplantae</taxon>
        <taxon>Chlorophyta</taxon>
        <taxon>Nephroselmidophyceae</taxon>
        <taxon>Nephroselmidales</taxon>
        <taxon>Nephroselmidaceae</taxon>
        <taxon>Nephroselmis</taxon>
    </lineage>
</organism>